<gene>
    <name evidence="1" type="primary">rpmF</name>
    <name type="ordered locus">RPA0526</name>
</gene>
<reference key="1">
    <citation type="journal article" date="2004" name="Nat. Biotechnol.">
        <title>Complete genome sequence of the metabolically versatile photosynthetic bacterium Rhodopseudomonas palustris.</title>
        <authorList>
            <person name="Larimer F.W."/>
            <person name="Chain P."/>
            <person name="Hauser L."/>
            <person name="Lamerdin J.E."/>
            <person name="Malfatti S."/>
            <person name="Do L."/>
            <person name="Land M.L."/>
            <person name="Pelletier D.A."/>
            <person name="Beatty J.T."/>
            <person name="Lang A.S."/>
            <person name="Tabita F.R."/>
            <person name="Gibson J.L."/>
            <person name="Hanson T.E."/>
            <person name="Bobst C."/>
            <person name="Torres y Torres J.L."/>
            <person name="Peres C."/>
            <person name="Harrison F.H."/>
            <person name="Gibson J."/>
            <person name="Harwood C.S."/>
        </authorList>
    </citation>
    <scope>NUCLEOTIDE SEQUENCE [LARGE SCALE GENOMIC DNA]</scope>
    <source>
        <strain>ATCC BAA-98 / CGA009</strain>
    </source>
</reference>
<reference key="2">
    <citation type="journal article" date="2004" name="J. Proteome Res.">
        <title>Characterization of the 70S ribosome from Rhodopseudomonas palustris using an integrated 'top-down' and 'bottom-up' mass spectrometric approach.</title>
        <authorList>
            <person name="Strader M.B."/>
            <person name="VerBerkmoes N.C."/>
            <person name="Tabb D.L."/>
            <person name="Connelly H.M."/>
            <person name="Barton J.W."/>
            <person name="Bruce B.D."/>
            <person name="Pelletier D.A."/>
            <person name="Davison B.H."/>
            <person name="Hettich R.L."/>
            <person name="Larimer F.W."/>
            <person name="Hurst G.B."/>
        </authorList>
    </citation>
    <scope>MASS SPECTROMETRY</scope>
    <source>
        <strain>ATCC BAA-98 / CGA009</strain>
    </source>
</reference>
<evidence type="ECO:0000255" key="1">
    <source>
        <dbReference type="HAMAP-Rule" id="MF_00340"/>
    </source>
</evidence>
<evidence type="ECO:0000256" key="2">
    <source>
        <dbReference type="SAM" id="MobiDB-lite"/>
    </source>
</evidence>
<evidence type="ECO:0000269" key="3">
    <source>
    </source>
</evidence>
<evidence type="ECO:0000305" key="4"/>
<keyword id="KW-0687">Ribonucleoprotein</keyword>
<keyword id="KW-0689">Ribosomal protein</keyword>
<dbReference type="EMBL" id="BX572594">
    <property type="protein sequence ID" value="CAE25970.1"/>
    <property type="molecule type" value="Genomic_DNA"/>
</dbReference>
<dbReference type="RefSeq" id="WP_011156094.1">
    <property type="nucleotide sequence ID" value="NZ_CP116810.1"/>
</dbReference>
<dbReference type="SMR" id="Q6NCE6"/>
<dbReference type="IntAct" id="Q6NCE6">
    <property type="interactions" value="1"/>
</dbReference>
<dbReference type="STRING" id="258594.RPA0526"/>
<dbReference type="GeneID" id="66891544"/>
<dbReference type="eggNOG" id="COG0333">
    <property type="taxonomic scope" value="Bacteria"/>
</dbReference>
<dbReference type="HOGENOM" id="CLU_129084_2_2_5"/>
<dbReference type="PhylomeDB" id="Q6NCE6"/>
<dbReference type="GO" id="GO:0015934">
    <property type="term" value="C:large ribosomal subunit"/>
    <property type="evidence" value="ECO:0007669"/>
    <property type="project" value="InterPro"/>
</dbReference>
<dbReference type="GO" id="GO:0003735">
    <property type="term" value="F:structural constituent of ribosome"/>
    <property type="evidence" value="ECO:0007669"/>
    <property type="project" value="InterPro"/>
</dbReference>
<dbReference type="GO" id="GO:0006412">
    <property type="term" value="P:translation"/>
    <property type="evidence" value="ECO:0007669"/>
    <property type="project" value="UniProtKB-UniRule"/>
</dbReference>
<dbReference type="Gene3D" id="1.20.5.640">
    <property type="entry name" value="Single helix bin"/>
    <property type="match status" value="1"/>
</dbReference>
<dbReference type="HAMAP" id="MF_00340">
    <property type="entry name" value="Ribosomal_bL32"/>
    <property type="match status" value="1"/>
</dbReference>
<dbReference type="InterPro" id="IPR002677">
    <property type="entry name" value="Ribosomal_bL32"/>
</dbReference>
<dbReference type="InterPro" id="IPR044957">
    <property type="entry name" value="Ribosomal_bL32_bact"/>
</dbReference>
<dbReference type="InterPro" id="IPR011332">
    <property type="entry name" value="Ribosomal_zn-bd"/>
</dbReference>
<dbReference type="NCBIfam" id="TIGR01031">
    <property type="entry name" value="rpmF_bact"/>
    <property type="match status" value="1"/>
</dbReference>
<dbReference type="PANTHER" id="PTHR35534">
    <property type="entry name" value="50S RIBOSOMAL PROTEIN L32"/>
    <property type="match status" value="1"/>
</dbReference>
<dbReference type="PANTHER" id="PTHR35534:SF1">
    <property type="entry name" value="LARGE RIBOSOMAL SUBUNIT PROTEIN BL32"/>
    <property type="match status" value="1"/>
</dbReference>
<dbReference type="Pfam" id="PF01783">
    <property type="entry name" value="Ribosomal_L32p"/>
    <property type="match status" value="1"/>
</dbReference>
<dbReference type="SUPFAM" id="SSF57829">
    <property type="entry name" value="Zn-binding ribosomal proteins"/>
    <property type="match status" value="1"/>
</dbReference>
<name>RL32_RHOPA</name>
<accession>Q6NCE6</accession>
<feature type="initiator methionine" description="Removed">
    <location>
        <position position="1"/>
    </location>
</feature>
<feature type="chain" id="PRO_0000172395" description="Large ribosomal subunit protein bL32">
    <location>
        <begin position="2"/>
        <end position="60"/>
    </location>
</feature>
<feature type="region of interest" description="Disordered" evidence="2">
    <location>
        <begin position="1"/>
        <end position="60"/>
    </location>
</feature>
<feature type="compositionally biased region" description="Basic residues" evidence="2">
    <location>
        <begin position="1"/>
        <end position="16"/>
    </location>
</feature>
<feature type="compositionally biased region" description="Basic and acidic residues" evidence="2">
    <location>
        <begin position="17"/>
        <end position="44"/>
    </location>
</feature>
<proteinExistence type="evidence at protein level"/>
<organism>
    <name type="scientific">Rhodopseudomonas palustris (strain ATCC BAA-98 / CGA009)</name>
    <dbReference type="NCBI Taxonomy" id="258594"/>
    <lineage>
        <taxon>Bacteria</taxon>
        <taxon>Pseudomonadati</taxon>
        <taxon>Pseudomonadota</taxon>
        <taxon>Alphaproteobacteria</taxon>
        <taxon>Hyphomicrobiales</taxon>
        <taxon>Nitrobacteraceae</taxon>
        <taxon>Rhodopseudomonas</taxon>
    </lineage>
</organism>
<comment type="mass spectrometry"/>
<comment type="similarity">
    <text evidence="1">Belongs to the bacterial ribosomal protein bL32 family.</text>
</comment>
<sequence>MAVPRRKTSPSRRGMRRSADAIKRPTYVEDKDSGELRRPHHLDLKTGMYKGRQVLKKKDS</sequence>
<protein>
    <recommendedName>
        <fullName evidence="1">Large ribosomal subunit protein bL32</fullName>
    </recommendedName>
    <alternativeName>
        <fullName evidence="4">50S ribosomal protein L32</fullName>
    </alternativeName>
    <alternativeName>
        <fullName>RRP-L32</fullName>
    </alternativeName>
</protein>